<keyword id="KW-0963">Cytoplasm</keyword>
<keyword id="KW-0269">Exonuclease</keyword>
<keyword id="KW-0378">Hydrolase</keyword>
<keyword id="KW-0540">Nuclease</keyword>
<keyword id="KW-1185">Reference proteome</keyword>
<gene>
    <name evidence="1" type="primary">xseB</name>
    <name type="ordered locus">MCA0819</name>
</gene>
<protein>
    <recommendedName>
        <fullName evidence="1">Exodeoxyribonuclease 7 small subunit</fullName>
        <ecNumber evidence="1">3.1.11.6</ecNumber>
    </recommendedName>
    <alternativeName>
        <fullName evidence="1">Exodeoxyribonuclease VII small subunit</fullName>
        <shortName evidence="1">Exonuclease VII small subunit</shortName>
    </alternativeName>
</protein>
<organism>
    <name type="scientific">Methylococcus capsulatus (strain ATCC 33009 / NCIMB 11132 / Bath)</name>
    <dbReference type="NCBI Taxonomy" id="243233"/>
    <lineage>
        <taxon>Bacteria</taxon>
        <taxon>Pseudomonadati</taxon>
        <taxon>Pseudomonadota</taxon>
        <taxon>Gammaproteobacteria</taxon>
        <taxon>Methylococcales</taxon>
        <taxon>Methylococcaceae</taxon>
        <taxon>Methylococcus</taxon>
    </lineage>
</organism>
<evidence type="ECO:0000255" key="1">
    <source>
        <dbReference type="HAMAP-Rule" id="MF_00337"/>
    </source>
</evidence>
<reference key="1">
    <citation type="journal article" date="2004" name="PLoS Biol.">
        <title>Genomic insights into methanotrophy: the complete genome sequence of Methylococcus capsulatus (Bath).</title>
        <authorList>
            <person name="Ward N.L."/>
            <person name="Larsen O."/>
            <person name="Sakwa J."/>
            <person name="Bruseth L."/>
            <person name="Khouri H.M."/>
            <person name="Durkin A.S."/>
            <person name="Dimitrov G."/>
            <person name="Jiang L."/>
            <person name="Scanlan D."/>
            <person name="Kang K.H."/>
            <person name="Lewis M.R."/>
            <person name="Nelson K.E."/>
            <person name="Methe B.A."/>
            <person name="Wu M."/>
            <person name="Heidelberg J.F."/>
            <person name="Paulsen I.T."/>
            <person name="Fouts D.E."/>
            <person name="Ravel J."/>
            <person name="Tettelin H."/>
            <person name="Ren Q."/>
            <person name="Read T.D."/>
            <person name="DeBoy R.T."/>
            <person name="Seshadri R."/>
            <person name="Salzberg S.L."/>
            <person name="Jensen H.B."/>
            <person name="Birkeland N.K."/>
            <person name="Nelson W.C."/>
            <person name="Dodson R.J."/>
            <person name="Grindhaug S.H."/>
            <person name="Holt I.E."/>
            <person name="Eidhammer I."/>
            <person name="Jonasen I."/>
            <person name="Vanaken S."/>
            <person name="Utterback T.R."/>
            <person name="Feldblyum T.V."/>
            <person name="Fraser C.M."/>
            <person name="Lillehaug J.R."/>
            <person name="Eisen J.A."/>
        </authorList>
    </citation>
    <scope>NUCLEOTIDE SEQUENCE [LARGE SCALE GENOMIC DNA]</scope>
    <source>
        <strain>ATCC 33009 / NCIMB 11132 / Bath</strain>
    </source>
</reference>
<name>EX7S_METCA</name>
<comment type="function">
    <text evidence="1">Bidirectionally degrades single-stranded DNA into large acid-insoluble oligonucleotides, which are then degraded further into small acid-soluble oligonucleotides.</text>
</comment>
<comment type="catalytic activity">
    <reaction evidence="1">
        <text>Exonucleolytic cleavage in either 5'- to 3'- or 3'- to 5'-direction to yield nucleoside 5'-phosphates.</text>
        <dbReference type="EC" id="3.1.11.6"/>
    </reaction>
</comment>
<comment type="subunit">
    <text evidence="1">Heterooligomer composed of large and small subunits.</text>
</comment>
<comment type="subcellular location">
    <subcellularLocation>
        <location evidence="1">Cytoplasm</location>
    </subcellularLocation>
</comment>
<comment type="similarity">
    <text evidence="1">Belongs to the XseB family.</text>
</comment>
<dbReference type="EC" id="3.1.11.6" evidence="1"/>
<dbReference type="EMBL" id="AE017282">
    <property type="protein sequence ID" value="AAU92858.1"/>
    <property type="molecule type" value="Genomic_DNA"/>
</dbReference>
<dbReference type="RefSeq" id="WP_010960143.1">
    <property type="nucleotide sequence ID" value="NC_002977.6"/>
</dbReference>
<dbReference type="SMR" id="Q60AM9"/>
<dbReference type="STRING" id="243233.MCA0819"/>
<dbReference type="GeneID" id="88223131"/>
<dbReference type="KEGG" id="mca:MCA0819"/>
<dbReference type="eggNOG" id="COG1722">
    <property type="taxonomic scope" value="Bacteria"/>
</dbReference>
<dbReference type="HOGENOM" id="CLU_145918_3_3_6"/>
<dbReference type="Proteomes" id="UP000006821">
    <property type="component" value="Chromosome"/>
</dbReference>
<dbReference type="GO" id="GO:0005829">
    <property type="term" value="C:cytosol"/>
    <property type="evidence" value="ECO:0007669"/>
    <property type="project" value="TreeGrafter"/>
</dbReference>
<dbReference type="GO" id="GO:0009318">
    <property type="term" value="C:exodeoxyribonuclease VII complex"/>
    <property type="evidence" value="ECO:0007669"/>
    <property type="project" value="InterPro"/>
</dbReference>
<dbReference type="GO" id="GO:0008855">
    <property type="term" value="F:exodeoxyribonuclease VII activity"/>
    <property type="evidence" value="ECO:0007669"/>
    <property type="project" value="UniProtKB-UniRule"/>
</dbReference>
<dbReference type="GO" id="GO:0006308">
    <property type="term" value="P:DNA catabolic process"/>
    <property type="evidence" value="ECO:0007669"/>
    <property type="project" value="UniProtKB-UniRule"/>
</dbReference>
<dbReference type="Gene3D" id="1.10.287.1040">
    <property type="entry name" value="Exonuclease VII, small subunit"/>
    <property type="match status" value="1"/>
</dbReference>
<dbReference type="HAMAP" id="MF_00337">
    <property type="entry name" value="Exonuc_7_S"/>
    <property type="match status" value="1"/>
</dbReference>
<dbReference type="InterPro" id="IPR003761">
    <property type="entry name" value="Exonuc_VII_S"/>
</dbReference>
<dbReference type="InterPro" id="IPR037004">
    <property type="entry name" value="Exonuc_VII_ssu_sf"/>
</dbReference>
<dbReference type="NCBIfam" id="NF002137">
    <property type="entry name" value="PRK00977.1-1"/>
    <property type="match status" value="1"/>
</dbReference>
<dbReference type="NCBIfam" id="NF002139">
    <property type="entry name" value="PRK00977.1-3"/>
    <property type="match status" value="1"/>
</dbReference>
<dbReference type="NCBIfam" id="NF002140">
    <property type="entry name" value="PRK00977.1-4"/>
    <property type="match status" value="1"/>
</dbReference>
<dbReference type="NCBIfam" id="TIGR01280">
    <property type="entry name" value="xseB"/>
    <property type="match status" value="1"/>
</dbReference>
<dbReference type="PANTHER" id="PTHR34137">
    <property type="entry name" value="EXODEOXYRIBONUCLEASE 7 SMALL SUBUNIT"/>
    <property type="match status" value="1"/>
</dbReference>
<dbReference type="PANTHER" id="PTHR34137:SF1">
    <property type="entry name" value="EXODEOXYRIBONUCLEASE 7 SMALL SUBUNIT"/>
    <property type="match status" value="1"/>
</dbReference>
<dbReference type="Pfam" id="PF02609">
    <property type="entry name" value="Exonuc_VII_S"/>
    <property type="match status" value="1"/>
</dbReference>
<dbReference type="PIRSF" id="PIRSF006488">
    <property type="entry name" value="Exonuc_VII_S"/>
    <property type="match status" value="1"/>
</dbReference>
<dbReference type="SUPFAM" id="SSF116842">
    <property type="entry name" value="XseB-like"/>
    <property type="match status" value="1"/>
</dbReference>
<proteinExistence type="inferred from homology"/>
<accession>Q60AM9</accession>
<sequence>MARKPPSFEEALTELEQLVERMEQGNLPLEESLKLFERGIELTRTCQKSLQDAEQKVQILLEENSLPTLKPFRDEP</sequence>
<feature type="chain" id="PRO_0000206971" description="Exodeoxyribonuclease 7 small subunit">
    <location>
        <begin position="1"/>
        <end position="76"/>
    </location>
</feature>